<gene>
    <name evidence="1" type="primary">ypfN</name>
    <name type="ordered locus">SeAg_B2628</name>
</gene>
<protein>
    <recommendedName>
        <fullName evidence="1">UPF0370 protein YpfN</fullName>
    </recommendedName>
</protein>
<sequence length="66" mass="8099">MDWLAKYWWILVLVFLVGVLLNVIKDLKRIDHKKFLANKPELPPHRDFNDKWDDEDDWPKKDQPKK</sequence>
<comment type="subcellular location">
    <subcellularLocation>
        <location evidence="1">Cell membrane</location>
        <topology evidence="1">Single-pass membrane protein</topology>
    </subcellularLocation>
</comment>
<comment type="similarity">
    <text evidence="1">Belongs to the UPF0370 family.</text>
</comment>
<feature type="chain" id="PRO_1000199727" description="UPF0370 protein YpfN">
    <location>
        <begin position="1"/>
        <end position="66"/>
    </location>
</feature>
<feature type="transmembrane region" description="Helical" evidence="1">
    <location>
        <begin position="4"/>
        <end position="24"/>
    </location>
</feature>
<feature type="region of interest" description="Disordered" evidence="2">
    <location>
        <begin position="39"/>
        <end position="66"/>
    </location>
</feature>
<feature type="compositionally biased region" description="Basic and acidic residues" evidence="2">
    <location>
        <begin position="42"/>
        <end position="51"/>
    </location>
</feature>
<accession>B5F0L1</accession>
<name>YPFN_SALA4</name>
<keyword id="KW-1003">Cell membrane</keyword>
<keyword id="KW-0472">Membrane</keyword>
<keyword id="KW-0812">Transmembrane</keyword>
<keyword id="KW-1133">Transmembrane helix</keyword>
<dbReference type="EMBL" id="CP001138">
    <property type="protein sequence ID" value="ACH51895.1"/>
    <property type="molecule type" value="Genomic_DNA"/>
</dbReference>
<dbReference type="RefSeq" id="WP_000383839.1">
    <property type="nucleotide sequence ID" value="NC_011149.1"/>
</dbReference>
<dbReference type="SMR" id="B5F0L1"/>
<dbReference type="KEGG" id="sea:SeAg_B2628"/>
<dbReference type="HOGENOM" id="CLU_198936_0_0_6"/>
<dbReference type="Proteomes" id="UP000008819">
    <property type="component" value="Chromosome"/>
</dbReference>
<dbReference type="GO" id="GO:0005886">
    <property type="term" value="C:plasma membrane"/>
    <property type="evidence" value="ECO:0007669"/>
    <property type="project" value="UniProtKB-SubCell"/>
</dbReference>
<dbReference type="HAMAP" id="MF_01566">
    <property type="entry name" value="UPF0370"/>
    <property type="match status" value="1"/>
</dbReference>
<dbReference type="InterPro" id="IPR020910">
    <property type="entry name" value="UPF0370"/>
</dbReference>
<dbReference type="NCBIfam" id="NF010185">
    <property type="entry name" value="PRK13664.1"/>
    <property type="match status" value="1"/>
</dbReference>
<dbReference type="Pfam" id="PF13980">
    <property type="entry name" value="UPF0370"/>
    <property type="match status" value="1"/>
</dbReference>
<evidence type="ECO:0000255" key="1">
    <source>
        <dbReference type="HAMAP-Rule" id="MF_01566"/>
    </source>
</evidence>
<evidence type="ECO:0000256" key="2">
    <source>
        <dbReference type="SAM" id="MobiDB-lite"/>
    </source>
</evidence>
<organism>
    <name type="scientific">Salmonella agona (strain SL483)</name>
    <dbReference type="NCBI Taxonomy" id="454166"/>
    <lineage>
        <taxon>Bacteria</taxon>
        <taxon>Pseudomonadati</taxon>
        <taxon>Pseudomonadota</taxon>
        <taxon>Gammaproteobacteria</taxon>
        <taxon>Enterobacterales</taxon>
        <taxon>Enterobacteriaceae</taxon>
        <taxon>Salmonella</taxon>
    </lineage>
</organism>
<reference key="1">
    <citation type="journal article" date="2011" name="J. Bacteriol.">
        <title>Comparative genomics of 28 Salmonella enterica isolates: evidence for CRISPR-mediated adaptive sublineage evolution.</title>
        <authorList>
            <person name="Fricke W.F."/>
            <person name="Mammel M.K."/>
            <person name="McDermott P.F."/>
            <person name="Tartera C."/>
            <person name="White D.G."/>
            <person name="Leclerc J.E."/>
            <person name="Ravel J."/>
            <person name="Cebula T.A."/>
        </authorList>
    </citation>
    <scope>NUCLEOTIDE SEQUENCE [LARGE SCALE GENOMIC DNA]</scope>
    <source>
        <strain>SL483</strain>
    </source>
</reference>
<proteinExistence type="inferred from homology"/>